<proteinExistence type="inferred from homology"/>
<keyword id="KW-0004">4Fe-4S</keyword>
<keyword id="KW-0227">DNA damage</keyword>
<keyword id="KW-0234">DNA repair</keyword>
<keyword id="KW-0326">Glycosidase</keyword>
<keyword id="KW-0378">Hydrolase</keyword>
<keyword id="KW-0408">Iron</keyword>
<keyword id="KW-0411">Iron-sulfur</keyword>
<keyword id="KW-0479">Metal-binding</keyword>
<keyword id="KW-1185">Reference proteome</keyword>
<dbReference type="EC" id="3.2.2.31" evidence="2"/>
<dbReference type="EMBL" id="AE000516">
    <property type="protein sequence ID" value="AAK48053.1"/>
    <property type="molecule type" value="Genomic_DNA"/>
</dbReference>
<dbReference type="PIR" id="F70804">
    <property type="entry name" value="F70804"/>
</dbReference>
<dbReference type="RefSeq" id="WP_003419495.1">
    <property type="nucleotide sequence ID" value="NZ_KK341227.1"/>
</dbReference>
<dbReference type="SMR" id="P9WQ08"/>
<dbReference type="KEGG" id="mtc:MT3695"/>
<dbReference type="PATRIC" id="fig|83331.31.peg.3978"/>
<dbReference type="HOGENOM" id="CLU_012862_2_0_11"/>
<dbReference type="Proteomes" id="UP000001020">
    <property type="component" value="Chromosome"/>
</dbReference>
<dbReference type="GO" id="GO:0051539">
    <property type="term" value="F:4 iron, 4 sulfur cluster binding"/>
    <property type="evidence" value="ECO:0007669"/>
    <property type="project" value="UniProtKB-KW"/>
</dbReference>
<dbReference type="GO" id="GO:0034039">
    <property type="term" value="F:8-oxo-7,8-dihydroguanine DNA N-glycosylase activity"/>
    <property type="evidence" value="ECO:0007669"/>
    <property type="project" value="TreeGrafter"/>
</dbReference>
<dbReference type="GO" id="GO:0035485">
    <property type="term" value="F:adenine/guanine mispair binding"/>
    <property type="evidence" value="ECO:0007669"/>
    <property type="project" value="TreeGrafter"/>
</dbReference>
<dbReference type="GO" id="GO:0046872">
    <property type="term" value="F:metal ion binding"/>
    <property type="evidence" value="ECO:0007669"/>
    <property type="project" value="UniProtKB-KW"/>
</dbReference>
<dbReference type="GO" id="GO:0032357">
    <property type="term" value="F:oxidized purine DNA binding"/>
    <property type="evidence" value="ECO:0007669"/>
    <property type="project" value="TreeGrafter"/>
</dbReference>
<dbReference type="GO" id="GO:0000701">
    <property type="term" value="F:purine-specific mismatch base pair DNA N-glycosylase activity"/>
    <property type="evidence" value="ECO:0007669"/>
    <property type="project" value="UniProtKB-EC"/>
</dbReference>
<dbReference type="GO" id="GO:0006284">
    <property type="term" value="P:base-excision repair"/>
    <property type="evidence" value="ECO:0007669"/>
    <property type="project" value="InterPro"/>
</dbReference>
<dbReference type="GO" id="GO:0006298">
    <property type="term" value="P:mismatch repair"/>
    <property type="evidence" value="ECO:0007669"/>
    <property type="project" value="TreeGrafter"/>
</dbReference>
<dbReference type="CDD" id="cd00056">
    <property type="entry name" value="ENDO3c"/>
    <property type="match status" value="1"/>
</dbReference>
<dbReference type="FunFam" id="1.10.340.30:FF:000003">
    <property type="entry name" value="A/G-specific adenine glycosylase"/>
    <property type="match status" value="1"/>
</dbReference>
<dbReference type="Gene3D" id="1.10.1670.10">
    <property type="entry name" value="Helix-hairpin-Helix base-excision DNA repair enzymes (C-terminal)"/>
    <property type="match status" value="1"/>
</dbReference>
<dbReference type="Gene3D" id="1.10.340.30">
    <property type="entry name" value="Hypothetical protein, domain 2"/>
    <property type="match status" value="1"/>
</dbReference>
<dbReference type="InterPro" id="IPR011257">
    <property type="entry name" value="DNA_glycosylase"/>
</dbReference>
<dbReference type="InterPro" id="IPR003651">
    <property type="entry name" value="Endonuclease3_FeS-loop_motif"/>
</dbReference>
<dbReference type="InterPro" id="IPR003265">
    <property type="entry name" value="HhH-GPD_domain"/>
</dbReference>
<dbReference type="InterPro" id="IPR023170">
    <property type="entry name" value="HhH_base_excis_C"/>
</dbReference>
<dbReference type="InterPro" id="IPR000445">
    <property type="entry name" value="HhH_motif"/>
</dbReference>
<dbReference type="InterPro" id="IPR044298">
    <property type="entry name" value="MIG/MutY"/>
</dbReference>
<dbReference type="PANTHER" id="PTHR42944">
    <property type="entry name" value="ADENINE DNA GLYCOSYLASE"/>
    <property type="match status" value="1"/>
</dbReference>
<dbReference type="PANTHER" id="PTHR42944:SF1">
    <property type="entry name" value="ADENINE DNA GLYCOSYLASE"/>
    <property type="match status" value="1"/>
</dbReference>
<dbReference type="Pfam" id="PF00633">
    <property type="entry name" value="HHH"/>
    <property type="match status" value="1"/>
</dbReference>
<dbReference type="Pfam" id="PF00730">
    <property type="entry name" value="HhH-GPD"/>
    <property type="match status" value="1"/>
</dbReference>
<dbReference type="SMART" id="SM00478">
    <property type="entry name" value="ENDO3c"/>
    <property type="match status" value="1"/>
</dbReference>
<dbReference type="SMART" id="SM00525">
    <property type="entry name" value="FES"/>
    <property type="match status" value="1"/>
</dbReference>
<dbReference type="SUPFAM" id="SSF48150">
    <property type="entry name" value="DNA-glycosylase"/>
    <property type="match status" value="1"/>
</dbReference>
<sequence length="304" mass="33684">MPHILPEPSVTGPRHISDTNLLAWYQRSHRDLPWREPGVSPWQILVSEFMLQQTPAARVLAIWPDWVRRWPTPSATATASTADVLRAWGKLGYPRRAKRLHECATVIARDHNDVVPDDIEILVTLPGVGSYTARAVACFAYRQRVPVVDTNVRRVVARAVHGRADAGAPSVPRDHADVLALLPHRETAPEFSVALMELGATVCTARTPRCGLCPLDWCAWRHAGYPPSDGPPRRGQAYTGTDRQVRGRLLDVLRAAEFPVTRAELDVAWLTDTAQRDRALESLLADALVTRTVDGRFALPGEGF</sequence>
<gene>
    <name type="primary">mutY</name>
    <name type="ordered locus">MT3695</name>
</gene>
<organism>
    <name type="scientific">Mycobacterium tuberculosis (strain CDC 1551 / Oshkosh)</name>
    <dbReference type="NCBI Taxonomy" id="83331"/>
    <lineage>
        <taxon>Bacteria</taxon>
        <taxon>Bacillati</taxon>
        <taxon>Actinomycetota</taxon>
        <taxon>Actinomycetes</taxon>
        <taxon>Mycobacteriales</taxon>
        <taxon>Mycobacteriaceae</taxon>
        <taxon>Mycobacterium</taxon>
        <taxon>Mycobacterium tuberculosis complex</taxon>
    </lineage>
</organism>
<feature type="chain" id="PRO_0000426858" description="Adenine DNA glycosylase">
    <location>
        <begin position="1"/>
        <end position="304"/>
    </location>
</feature>
<feature type="domain" description="HhH">
    <location>
        <begin position="111"/>
        <end position="139"/>
    </location>
</feature>
<feature type="active site" description="Proton donor/acceptor" evidence="3">
    <location>
        <position position="48"/>
    </location>
</feature>
<feature type="binding site" evidence="1">
    <location>
        <position position="203"/>
    </location>
    <ligand>
        <name>[4Fe-4S] cluster</name>
        <dbReference type="ChEBI" id="CHEBI:49883"/>
    </ligand>
</feature>
<feature type="binding site" evidence="1">
    <location>
        <position position="210"/>
    </location>
    <ligand>
        <name>[4Fe-4S] cluster</name>
        <dbReference type="ChEBI" id="CHEBI:49883"/>
    </ligand>
</feature>
<feature type="binding site" evidence="1">
    <location>
        <position position="213"/>
    </location>
    <ligand>
        <name>[4Fe-4S] cluster</name>
        <dbReference type="ChEBI" id="CHEBI:49883"/>
    </ligand>
</feature>
<feature type="binding site" evidence="1">
    <location>
        <position position="218"/>
    </location>
    <ligand>
        <name>[4Fe-4S] cluster</name>
        <dbReference type="ChEBI" id="CHEBI:49883"/>
    </ligand>
</feature>
<feature type="site" description="Transition state stabilizer" evidence="3">
    <location>
        <position position="149"/>
    </location>
</feature>
<comment type="function">
    <text evidence="2">Adenine glycosylase active on G:A and C:A mispairs, as well as processing 7,8-dihydro-8-oxoguanine:A (8-oxoG) mismatches.</text>
</comment>
<comment type="catalytic activity">
    <reaction evidence="2">
        <text>Hydrolyzes free adenine bases from 7,8-dihydro-8-oxoguanine:adenine mismatched double-stranded DNA, leaving an apurinic site.</text>
        <dbReference type="EC" id="3.2.2.31"/>
    </reaction>
</comment>
<comment type="cofactor">
    <cofactor evidence="4">
        <name>[4Fe-4S] cluster</name>
        <dbReference type="ChEBI" id="CHEBI:49883"/>
    </cofactor>
    <text evidence="4">Binds 1 [4Fe-4S] cluster. The cluster does not appear to play a role in catalysis, but is probably involved in the proper positioning of the enzyme along the DNA strand.</text>
</comment>
<comment type="similarity">
    <text evidence="4">Belongs to the Nth/MutY family.</text>
</comment>
<reference key="1">
    <citation type="journal article" date="2002" name="J. Bacteriol.">
        <title>Whole-genome comparison of Mycobacterium tuberculosis clinical and laboratory strains.</title>
        <authorList>
            <person name="Fleischmann R.D."/>
            <person name="Alland D."/>
            <person name="Eisen J.A."/>
            <person name="Carpenter L."/>
            <person name="White O."/>
            <person name="Peterson J.D."/>
            <person name="DeBoy R.T."/>
            <person name="Dodson R.J."/>
            <person name="Gwinn M.L."/>
            <person name="Haft D.H."/>
            <person name="Hickey E.K."/>
            <person name="Kolonay J.F."/>
            <person name="Nelson W.C."/>
            <person name="Umayam L.A."/>
            <person name="Ermolaeva M.D."/>
            <person name="Salzberg S.L."/>
            <person name="Delcher A."/>
            <person name="Utterback T.R."/>
            <person name="Weidman J.F."/>
            <person name="Khouri H.M."/>
            <person name="Gill J."/>
            <person name="Mikula A."/>
            <person name="Bishai W."/>
            <person name="Jacobs W.R. Jr."/>
            <person name="Venter J.C."/>
            <person name="Fraser C.M."/>
        </authorList>
    </citation>
    <scope>NUCLEOTIDE SEQUENCE [LARGE SCALE GENOMIC DNA]</scope>
    <source>
        <strain>CDC 1551 / Oshkosh</strain>
    </source>
</reference>
<evidence type="ECO:0000250" key="1"/>
<evidence type="ECO:0000250" key="2">
    <source>
        <dbReference type="UniProtKB" id="A0R567"/>
    </source>
</evidence>
<evidence type="ECO:0000250" key="3">
    <source>
        <dbReference type="UniProtKB" id="P83847"/>
    </source>
</evidence>
<evidence type="ECO:0000305" key="4"/>
<name>MUTY_MYCTO</name>
<protein>
    <recommendedName>
        <fullName>Adenine DNA glycosylase</fullName>
        <ecNumber evidence="2">3.2.2.31</ecNumber>
    </recommendedName>
</protein>
<accession>P9WQ08</accession>
<accession>F2GKC9</accession>
<accession>O53574</accession>
<accession>Q7D581</accession>